<protein>
    <recommendedName>
        <fullName evidence="1">Putative pre-16S rRNA nuclease</fullName>
        <ecNumber evidence="1">3.1.-.-</ecNumber>
    </recommendedName>
</protein>
<gene>
    <name type="ordered locus">CTA_0202</name>
</gene>
<dbReference type="EC" id="3.1.-.-" evidence="1"/>
<dbReference type="EMBL" id="CP000051">
    <property type="protein sequence ID" value="AAX50444.1"/>
    <property type="molecule type" value="Genomic_DNA"/>
</dbReference>
<dbReference type="SMR" id="Q3KMH8"/>
<dbReference type="KEGG" id="cta:CTA_0202"/>
<dbReference type="HOGENOM" id="CLU_098240_2_0_0"/>
<dbReference type="Proteomes" id="UP000002532">
    <property type="component" value="Chromosome"/>
</dbReference>
<dbReference type="GO" id="GO:0005829">
    <property type="term" value="C:cytosol"/>
    <property type="evidence" value="ECO:0007669"/>
    <property type="project" value="TreeGrafter"/>
</dbReference>
<dbReference type="GO" id="GO:0004518">
    <property type="term" value="F:nuclease activity"/>
    <property type="evidence" value="ECO:0007669"/>
    <property type="project" value="UniProtKB-KW"/>
</dbReference>
<dbReference type="GO" id="GO:0000967">
    <property type="term" value="P:rRNA 5'-end processing"/>
    <property type="evidence" value="ECO:0007669"/>
    <property type="project" value="UniProtKB-UniRule"/>
</dbReference>
<dbReference type="CDD" id="cd16964">
    <property type="entry name" value="YqgF"/>
    <property type="match status" value="1"/>
</dbReference>
<dbReference type="FunFam" id="3.30.420.140:FF:000020">
    <property type="entry name" value="Putative pre-16S rRNA nuclease"/>
    <property type="match status" value="1"/>
</dbReference>
<dbReference type="Gene3D" id="3.30.420.140">
    <property type="entry name" value="YqgF/RNase H-like domain"/>
    <property type="match status" value="1"/>
</dbReference>
<dbReference type="HAMAP" id="MF_00651">
    <property type="entry name" value="Nuclease_YqgF"/>
    <property type="match status" value="1"/>
</dbReference>
<dbReference type="InterPro" id="IPR012337">
    <property type="entry name" value="RNaseH-like_sf"/>
</dbReference>
<dbReference type="InterPro" id="IPR005227">
    <property type="entry name" value="YqgF"/>
</dbReference>
<dbReference type="InterPro" id="IPR006641">
    <property type="entry name" value="YqgF/RNaseH-like_dom"/>
</dbReference>
<dbReference type="InterPro" id="IPR037027">
    <property type="entry name" value="YqgF/RNaseH-like_dom_sf"/>
</dbReference>
<dbReference type="NCBIfam" id="TIGR00250">
    <property type="entry name" value="RNAse_H_YqgF"/>
    <property type="match status" value="1"/>
</dbReference>
<dbReference type="PANTHER" id="PTHR33317">
    <property type="entry name" value="POLYNUCLEOTIDYL TRANSFERASE, RIBONUCLEASE H-LIKE SUPERFAMILY PROTEIN"/>
    <property type="match status" value="1"/>
</dbReference>
<dbReference type="PANTHER" id="PTHR33317:SF4">
    <property type="entry name" value="POLYNUCLEOTIDYL TRANSFERASE, RIBONUCLEASE H-LIKE SUPERFAMILY PROTEIN"/>
    <property type="match status" value="1"/>
</dbReference>
<dbReference type="Pfam" id="PF03652">
    <property type="entry name" value="RuvX"/>
    <property type="match status" value="1"/>
</dbReference>
<dbReference type="SMART" id="SM00732">
    <property type="entry name" value="YqgFc"/>
    <property type="match status" value="1"/>
</dbReference>
<dbReference type="SUPFAM" id="SSF53098">
    <property type="entry name" value="Ribonuclease H-like"/>
    <property type="match status" value="1"/>
</dbReference>
<organism>
    <name type="scientific">Chlamydia trachomatis serovar A (strain ATCC VR-571B / DSM 19440 / HAR-13)</name>
    <dbReference type="NCBI Taxonomy" id="315277"/>
    <lineage>
        <taxon>Bacteria</taxon>
        <taxon>Pseudomonadati</taxon>
        <taxon>Chlamydiota</taxon>
        <taxon>Chlamydiia</taxon>
        <taxon>Chlamydiales</taxon>
        <taxon>Chlamydiaceae</taxon>
        <taxon>Chlamydia/Chlamydophila group</taxon>
        <taxon>Chlamydia</taxon>
    </lineage>
</organism>
<name>YQGF_CHLTA</name>
<comment type="function">
    <text evidence="1">Could be a nuclease involved in processing of the 5'-end of pre-16S rRNA.</text>
</comment>
<comment type="subcellular location">
    <subcellularLocation>
        <location evidence="1">Cytoplasm</location>
    </subcellularLocation>
</comment>
<comment type="similarity">
    <text evidence="1">Belongs to the YqgF nuclease family.</text>
</comment>
<accession>Q3KMH8</accession>
<keyword id="KW-0963">Cytoplasm</keyword>
<keyword id="KW-0378">Hydrolase</keyword>
<keyword id="KW-0540">Nuclease</keyword>
<keyword id="KW-0690">Ribosome biogenesis</keyword>
<feature type="chain" id="PRO_0000257515" description="Putative pre-16S rRNA nuclease">
    <location>
        <begin position="1"/>
        <end position="148"/>
    </location>
</feature>
<reference key="1">
    <citation type="journal article" date="2005" name="Infect. Immun.">
        <title>Comparative genomic analysis of Chlamydia trachomatis oculotropic and genitotropic strains.</title>
        <authorList>
            <person name="Carlson J.H."/>
            <person name="Porcella S.F."/>
            <person name="McClarty G."/>
            <person name="Caldwell H.D."/>
        </authorList>
    </citation>
    <scope>NUCLEOTIDE SEQUENCE [LARGE SCALE GENOMIC DNA]</scope>
    <source>
        <strain>ATCC VR-571B / DSM 19440 / HAR-13</strain>
    </source>
</reference>
<sequence>MNIAKQQQAFLGIDYGKKRIGLAFASSPLLIPLPIGNVEARSSLTLTAQALVSIIKERAVTTVVFGNPLPMQKAYASSVQSEIQELAALIQEMTAIEVILWDERLSSAQAERMLKSDCGLNRKQRKNPSDSLAATLILSSFLDSRKLY</sequence>
<evidence type="ECO:0000255" key="1">
    <source>
        <dbReference type="HAMAP-Rule" id="MF_00651"/>
    </source>
</evidence>
<proteinExistence type="inferred from homology"/>